<organism>
    <name type="scientific">Escherichia coli O81 (strain ED1a)</name>
    <dbReference type="NCBI Taxonomy" id="585397"/>
    <lineage>
        <taxon>Bacteria</taxon>
        <taxon>Pseudomonadati</taxon>
        <taxon>Pseudomonadota</taxon>
        <taxon>Gammaproteobacteria</taxon>
        <taxon>Enterobacterales</taxon>
        <taxon>Enterobacteriaceae</taxon>
        <taxon>Escherichia</taxon>
    </lineage>
</organism>
<sequence length="365" mass="41221">MFEINPVNNRIQDLTERSDVLRGYLDYDAKKERLEEVNAELEQPDVWNEPERAQALGKERSSLEAVVDTLDQMKQGLEDVSGLLELAVEADDEETFNEAVAELDALEEKLAQLEFRRMFSGEYDSADCYLDIQAGSGGTEAQDWASMLERMYLRWAESRGFKTEIIEESEGEVAGIKSVTIKISGDYAYGWLRTETGVHRLVRKSPFDSGGRRHTSFSSAFVYPEVDDDIDIEINPADLRIDVYRASGAGGQHVNRTESAVRITHIPTGIVTQCQNDRSQHKNKDQAMKQMKAKLYELEMQKKNAEKQAMEDNKSDIGWGSQIRSYVLDDSRIKDLRTGVETRNTQAVLDGSLDQFIEASLKAGL</sequence>
<comment type="function">
    <text evidence="1">Peptide chain release factor 2 directs the termination of translation in response to the peptide chain termination codons UGA and UAA.</text>
</comment>
<comment type="subcellular location">
    <subcellularLocation>
        <location evidence="1">Cytoplasm</location>
    </subcellularLocation>
</comment>
<comment type="PTM">
    <text evidence="1">Methylated by PrmC. Methylation increases the termination efficiency of RF2.</text>
</comment>
<comment type="similarity">
    <text evidence="1">Belongs to the prokaryotic/mitochondrial release factor family.</text>
</comment>
<feature type="chain" id="PRO_1000193554" description="Peptide chain release factor 2">
    <location>
        <begin position="1"/>
        <end position="365"/>
    </location>
</feature>
<feature type="modified residue" description="N5-methylglutamine" evidence="1">
    <location>
        <position position="252"/>
    </location>
</feature>
<reference key="1">
    <citation type="journal article" date="2009" name="PLoS Genet.">
        <title>Organised genome dynamics in the Escherichia coli species results in highly diverse adaptive paths.</title>
        <authorList>
            <person name="Touchon M."/>
            <person name="Hoede C."/>
            <person name="Tenaillon O."/>
            <person name="Barbe V."/>
            <person name="Baeriswyl S."/>
            <person name="Bidet P."/>
            <person name="Bingen E."/>
            <person name="Bonacorsi S."/>
            <person name="Bouchier C."/>
            <person name="Bouvet O."/>
            <person name="Calteau A."/>
            <person name="Chiapello H."/>
            <person name="Clermont O."/>
            <person name="Cruveiller S."/>
            <person name="Danchin A."/>
            <person name="Diard M."/>
            <person name="Dossat C."/>
            <person name="Karoui M.E."/>
            <person name="Frapy E."/>
            <person name="Garry L."/>
            <person name="Ghigo J.M."/>
            <person name="Gilles A.M."/>
            <person name="Johnson J."/>
            <person name="Le Bouguenec C."/>
            <person name="Lescat M."/>
            <person name="Mangenot S."/>
            <person name="Martinez-Jehanne V."/>
            <person name="Matic I."/>
            <person name="Nassif X."/>
            <person name="Oztas S."/>
            <person name="Petit M.A."/>
            <person name="Pichon C."/>
            <person name="Rouy Z."/>
            <person name="Ruf C.S."/>
            <person name="Schneider D."/>
            <person name="Tourret J."/>
            <person name="Vacherie B."/>
            <person name="Vallenet D."/>
            <person name="Medigue C."/>
            <person name="Rocha E.P.C."/>
            <person name="Denamur E."/>
        </authorList>
    </citation>
    <scope>NUCLEOTIDE SEQUENCE [LARGE SCALE GENOMIC DNA]</scope>
    <source>
        <strain>ED1a</strain>
    </source>
</reference>
<name>RF2_ECO81</name>
<keyword id="KW-0963">Cytoplasm</keyword>
<keyword id="KW-0488">Methylation</keyword>
<keyword id="KW-0648">Protein biosynthesis</keyword>
<accession>B7MZI9</accession>
<proteinExistence type="inferred from homology"/>
<protein>
    <recommendedName>
        <fullName evidence="1">Peptide chain release factor 2</fullName>
        <shortName evidence="1">RF-2</shortName>
    </recommendedName>
</protein>
<dbReference type="EMBL" id="CU928162">
    <property type="protein sequence ID" value="CAR09507.2"/>
    <property type="molecule type" value="Genomic_DNA"/>
</dbReference>
<dbReference type="RefSeq" id="WP_001701073.1">
    <property type="nucleotide sequence ID" value="NC_011745.1"/>
</dbReference>
<dbReference type="SMR" id="B7MZI9"/>
<dbReference type="GeneID" id="93779111"/>
<dbReference type="KEGG" id="ecq:ECED1_3350"/>
<dbReference type="HOGENOM" id="CLU_220733_1_0_6"/>
<dbReference type="Proteomes" id="UP000000748">
    <property type="component" value="Chromosome"/>
</dbReference>
<dbReference type="GO" id="GO:0005737">
    <property type="term" value="C:cytoplasm"/>
    <property type="evidence" value="ECO:0007669"/>
    <property type="project" value="UniProtKB-SubCell"/>
</dbReference>
<dbReference type="GO" id="GO:0016149">
    <property type="term" value="F:translation release factor activity, codon specific"/>
    <property type="evidence" value="ECO:0007669"/>
    <property type="project" value="UniProtKB-UniRule"/>
</dbReference>
<dbReference type="FunFam" id="1.20.58.410:FF:000001">
    <property type="entry name" value="Peptide chain release factor 2"/>
    <property type="match status" value="1"/>
</dbReference>
<dbReference type="FunFam" id="3.30.160.20:FF:000010">
    <property type="entry name" value="Peptide chain release factor 2"/>
    <property type="match status" value="1"/>
</dbReference>
<dbReference type="Gene3D" id="3.30.160.20">
    <property type="match status" value="1"/>
</dbReference>
<dbReference type="Gene3D" id="3.30.70.1660">
    <property type="match status" value="1"/>
</dbReference>
<dbReference type="Gene3D" id="1.20.58.410">
    <property type="entry name" value="Release factor"/>
    <property type="match status" value="1"/>
</dbReference>
<dbReference type="HAMAP" id="MF_00094">
    <property type="entry name" value="Rel_fac_2"/>
    <property type="match status" value="1"/>
</dbReference>
<dbReference type="InterPro" id="IPR005139">
    <property type="entry name" value="PCRF"/>
</dbReference>
<dbReference type="InterPro" id="IPR000352">
    <property type="entry name" value="Pep_chain_release_fac_I"/>
</dbReference>
<dbReference type="InterPro" id="IPR045853">
    <property type="entry name" value="Pep_chain_release_fac_I_sf"/>
</dbReference>
<dbReference type="InterPro" id="IPR004374">
    <property type="entry name" value="PrfB"/>
</dbReference>
<dbReference type="NCBIfam" id="TIGR00020">
    <property type="entry name" value="prfB"/>
    <property type="match status" value="1"/>
</dbReference>
<dbReference type="PANTHER" id="PTHR43116:SF3">
    <property type="entry name" value="CLASS I PEPTIDE CHAIN RELEASE FACTOR"/>
    <property type="match status" value="1"/>
</dbReference>
<dbReference type="PANTHER" id="PTHR43116">
    <property type="entry name" value="PEPTIDE CHAIN RELEASE FACTOR 2"/>
    <property type="match status" value="1"/>
</dbReference>
<dbReference type="Pfam" id="PF03462">
    <property type="entry name" value="PCRF"/>
    <property type="match status" value="1"/>
</dbReference>
<dbReference type="Pfam" id="PF00472">
    <property type="entry name" value="RF-1"/>
    <property type="match status" value="1"/>
</dbReference>
<dbReference type="SMART" id="SM00937">
    <property type="entry name" value="PCRF"/>
    <property type="match status" value="1"/>
</dbReference>
<dbReference type="SUPFAM" id="SSF75620">
    <property type="entry name" value="Release factor"/>
    <property type="match status" value="1"/>
</dbReference>
<dbReference type="PROSITE" id="PS00745">
    <property type="entry name" value="RF_PROK_I"/>
    <property type="match status" value="1"/>
</dbReference>
<gene>
    <name evidence="1" type="primary">prfB</name>
    <name type="ordered locus">ECED1_3350</name>
</gene>
<evidence type="ECO:0000255" key="1">
    <source>
        <dbReference type="HAMAP-Rule" id="MF_00094"/>
    </source>
</evidence>